<feature type="chain" id="PRO_0000207008" description="Exodeoxyribonuclease 7 small subunit">
    <location>
        <begin position="1"/>
        <end position="76"/>
    </location>
</feature>
<evidence type="ECO:0000255" key="1">
    <source>
        <dbReference type="HAMAP-Rule" id="MF_00337"/>
    </source>
</evidence>
<proteinExistence type="inferred from homology"/>
<gene>
    <name evidence="1" type="primary">xseB</name>
    <name type="ordered locus">MW1475</name>
</gene>
<dbReference type="EC" id="3.1.11.6" evidence="1"/>
<dbReference type="EMBL" id="BA000033">
    <property type="protein sequence ID" value="BAB95340.1"/>
    <property type="molecule type" value="Genomic_DNA"/>
</dbReference>
<dbReference type="RefSeq" id="WP_000159865.1">
    <property type="nucleotide sequence ID" value="NC_003923.1"/>
</dbReference>
<dbReference type="SMR" id="P67462"/>
<dbReference type="KEGG" id="sam:MW1475"/>
<dbReference type="HOGENOM" id="CLU_145918_3_2_9"/>
<dbReference type="GO" id="GO:0005829">
    <property type="term" value="C:cytosol"/>
    <property type="evidence" value="ECO:0007669"/>
    <property type="project" value="TreeGrafter"/>
</dbReference>
<dbReference type="GO" id="GO:0009318">
    <property type="term" value="C:exodeoxyribonuclease VII complex"/>
    <property type="evidence" value="ECO:0007669"/>
    <property type="project" value="InterPro"/>
</dbReference>
<dbReference type="GO" id="GO:0008855">
    <property type="term" value="F:exodeoxyribonuclease VII activity"/>
    <property type="evidence" value="ECO:0007669"/>
    <property type="project" value="UniProtKB-UniRule"/>
</dbReference>
<dbReference type="GO" id="GO:0006308">
    <property type="term" value="P:DNA catabolic process"/>
    <property type="evidence" value="ECO:0007669"/>
    <property type="project" value="UniProtKB-UniRule"/>
</dbReference>
<dbReference type="FunFam" id="1.10.287.1040:FF:000006">
    <property type="entry name" value="Exodeoxyribonuclease 7 small subunit"/>
    <property type="match status" value="1"/>
</dbReference>
<dbReference type="Gene3D" id="1.10.287.1040">
    <property type="entry name" value="Exonuclease VII, small subunit"/>
    <property type="match status" value="1"/>
</dbReference>
<dbReference type="HAMAP" id="MF_00337">
    <property type="entry name" value="Exonuc_7_S"/>
    <property type="match status" value="1"/>
</dbReference>
<dbReference type="InterPro" id="IPR003761">
    <property type="entry name" value="Exonuc_VII_S"/>
</dbReference>
<dbReference type="InterPro" id="IPR037004">
    <property type="entry name" value="Exonuc_VII_ssu_sf"/>
</dbReference>
<dbReference type="NCBIfam" id="NF002140">
    <property type="entry name" value="PRK00977.1-4"/>
    <property type="match status" value="1"/>
</dbReference>
<dbReference type="NCBIfam" id="NF010671">
    <property type="entry name" value="PRK14068.1"/>
    <property type="match status" value="1"/>
</dbReference>
<dbReference type="NCBIfam" id="TIGR01280">
    <property type="entry name" value="xseB"/>
    <property type="match status" value="1"/>
</dbReference>
<dbReference type="PANTHER" id="PTHR34137">
    <property type="entry name" value="EXODEOXYRIBONUCLEASE 7 SMALL SUBUNIT"/>
    <property type="match status" value="1"/>
</dbReference>
<dbReference type="PANTHER" id="PTHR34137:SF1">
    <property type="entry name" value="EXODEOXYRIBONUCLEASE 7 SMALL SUBUNIT"/>
    <property type="match status" value="1"/>
</dbReference>
<dbReference type="Pfam" id="PF02609">
    <property type="entry name" value="Exonuc_VII_S"/>
    <property type="match status" value="1"/>
</dbReference>
<dbReference type="PIRSF" id="PIRSF006488">
    <property type="entry name" value="Exonuc_VII_S"/>
    <property type="match status" value="1"/>
</dbReference>
<dbReference type="SUPFAM" id="SSF116842">
    <property type="entry name" value="XseB-like"/>
    <property type="match status" value="1"/>
</dbReference>
<reference key="1">
    <citation type="journal article" date="2002" name="Lancet">
        <title>Genome and virulence determinants of high virulence community-acquired MRSA.</title>
        <authorList>
            <person name="Baba T."/>
            <person name="Takeuchi F."/>
            <person name="Kuroda M."/>
            <person name="Yuzawa H."/>
            <person name="Aoki K."/>
            <person name="Oguchi A."/>
            <person name="Nagai Y."/>
            <person name="Iwama N."/>
            <person name="Asano K."/>
            <person name="Naimi T."/>
            <person name="Kuroda H."/>
            <person name="Cui L."/>
            <person name="Yamamoto K."/>
            <person name="Hiramatsu K."/>
        </authorList>
    </citation>
    <scope>NUCLEOTIDE SEQUENCE [LARGE SCALE GENOMIC DNA]</scope>
    <source>
        <strain>MW2</strain>
    </source>
</reference>
<sequence length="76" mass="8760">MTKETQSFEEMMQELEQIVQKLDNETVSLEESLDLYQRGMKLSAACDTTLKNAEKKVNDLIKEEAEDVKNDESTDE</sequence>
<comment type="function">
    <text evidence="1">Bidirectionally degrades single-stranded DNA into large acid-insoluble oligonucleotides, which are then degraded further into small acid-soluble oligonucleotides.</text>
</comment>
<comment type="catalytic activity">
    <reaction evidence="1">
        <text>Exonucleolytic cleavage in either 5'- to 3'- or 3'- to 5'-direction to yield nucleoside 5'-phosphates.</text>
        <dbReference type="EC" id="3.1.11.6"/>
    </reaction>
</comment>
<comment type="subunit">
    <text evidence="1">Heterooligomer composed of large and small subunits.</text>
</comment>
<comment type="subcellular location">
    <subcellularLocation>
        <location evidence="1">Cytoplasm</location>
    </subcellularLocation>
</comment>
<comment type="similarity">
    <text evidence="1">Belongs to the XseB family.</text>
</comment>
<accession>P67462</accession>
<accession>Q99TX1</accession>
<organism>
    <name type="scientific">Staphylococcus aureus (strain MW2)</name>
    <dbReference type="NCBI Taxonomy" id="196620"/>
    <lineage>
        <taxon>Bacteria</taxon>
        <taxon>Bacillati</taxon>
        <taxon>Bacillota</taxon>
        <taxon>Bacilli</taxon>
        <taxon>Bacillales</taxon>
        <taxon>Staphylococcaceae</taxon>
        <taxon>Staphylococcus</taxon>
    </lineage>
</organism>
<name>EX7S_STAAW</name>
<keyword id="KW-0963">Cytoplasm</keyword>
<keyword id="KW-0269">Exonuclease</keyword>
<keyword id="KW-0378">Hydrolase</keyword>
<keyword id="KW-0540">Nuclease</keyword>
<protein>
    <recommendedName>
        <fullName evidence="1">Exodeoxyribonuclease 7 small subunit</fullName>
        <ecNumber evidence="1">3.1.11.6</ecNumber>
    </recommendedName>
    <alternativeName>
        <fullName evidence="1">Exodeoxyribonuclease VII small subunit</fullName>
        <shortName evidence="1">Exonuclease VII small subunit</shortName>
    </alternativeName>
</protein>